<organism>
    <name type="scientific">Staphylococcus aureus (strain N315)</name>
    <dbReference type="NCBI Taxonomy" id="158879"/>
    <lineage>
        <taxon>Bacteria</taxon>
        <taxon>Bacillati</taxon>
        <taxon>Bacillota</taxon>
        <taxon>Bacilli</taxon>
        <taxon>Bacillales</taxon>
        <taxon>Staphylococcaceae</taxon>
        <taxon>Staphylococcus</taxon>
    </lineage>
</organism>
<gene>
    <name evidence="1" type="primary">pyrE</name>
    <name type="ordered locus">SA1048</name>
</gene>
<protein>
    <recommendedName>
        <fullName evidence="1">Orotate phosphoribosyltransferase</fullName>
        <shortName evidence="1">OPRT</shortName>
        <shortName evidence="1">OPRTase</shortName>
        <ecNumber evidence="1">2.4.2.10</ecNumber>
    </recommendedName>
</protein>
<name>PYRE_STAAN</name>
<feature type="chain" id="PRO_0000110738" description="Orotate phosphoribosyltransferase">
    <location>
        <begin position="1"/>
        <end position="203"/>
    </location>
</feature>
<feature type="binding site" evidence="1">
    <location>
        <position position="94"/>
    </location>
    <ligand>
        <name>5-phospho-alpha-D-ribose 1-diphosphate</name>
        <dbReference type="ChEBI" id="CHEBI:58017"/>
        <note>ligand shared between dimeric partners</note>
    </ligand>
</feature>
<feature type="binding site" evidence="1">
    <location>
        <position position="98"/>
    </location>
    <ligand>
        <name>5-phospho-alpha-D-ribose 1-diphosphate</name>
        <dbReference type="ChEBI" id="CHEBI:58017"/>
        <note>ligand shared between dimeric partners</note>
    </ligand>
</feature>
<feature type="binding site" evidence="1">
    <location>
        <position position="100"/>
    </location>
    <ligand>
        <name>5-phospho-alpha-D-ribose 1-diphosphate</name>
        <dbReference type="ChEBI" id="CHEBI:58017"/>
        <note>ligand shared between dimeric partners</note>
    </ligand>
</feature>
<feature type="binding site" description="in other chain" evidence="1">
    <location>
        <begin position="120"/>
        <end position="128"/>
    </location>
    <ligand>
        <name>5-phospho-alpha-D-ribose 1-diphosphate</name>
        <dbReference type="ChEBI" id="CHEBI:58017"/>
        <note>ligand shared between dimeric partners</note>
    </ligand>
</feature>
<feature type="binding site" evidence="1">
    <location>
        <position position="124"/>
    </location>
    <ligand>
        <name>orotate</name>
        <dbReference type="ChEBI" id="CHEBI:30839"/>
    </ligand>
</feature>
<sequence length="203" mass="22057">MAKEIAKSLLDIEAVTLSPNDLYTWSSGIKSPIYCDNRVTLGYPLVRGAIRDGLINLIKEHFPEVEVISGTATAGIPHAAFIAEKLKLPMNYVRSSNKSHGKQNQIEGAKSEGKKVVVIEDLISTGGSSVTAVEALKQAGAEVLGVVAIFTYGLKKADDTFSNIQLPFYTLSDYNELIEVAENEGKISSEDIQTLVEWRDNLA</sequence>
<comment type="function">
    <text evidence="1">Catalyzes the transfer of a ribosyl phosphate group from 5-phosphoribose 1-diphosphate to orotate, leading to the formation of orotidine monophosphate (OMP).</text>
</comment>
<comment type="catalytic activity">
    <reaction evidence="1">
        <text>orotidine 5'-phosphate + diphosphate = orotate + 5-phospho-alpha-D-ribose 1-diphosphate</text>
        <dbReference type="Rhea" id="RHEA:10380"/>
        <dbReference type="ChEBI" id="CHEBI:30839"/>
        <dbReference type="ChEBI" id="CHEBI:33019"/>
        <dbReference type="ChEBI" id="CHEBI:57538"/>
        <dbReference type="ChEBI" id="CHEBI:58017"/>
        <dbReference type="EC" id="2.4.2.10"/>
    </reaction>
</comment>
<comment type="cofactor">
    <cofactor evidence="1">
        <name>Mg(2+)</name>
        <dbReference type="ChEBI" id="CHEBI:18420"/>
    </cofactor>
</comment>
<comment type="pathway">
    <text evidence="1">Pyrimidine metabolism; UMP biosynthesis via de novo pathway; UMP from orotate: step 1/2.</text>
</comment>
<comment type="subunit">
    <text evidence="1">Homodimer.</text>
</comment>
<comment type="similarity">
    <text evidence="1">Belongs to the purine/pyrimidine phosphoribosyltransferase family. PyrE subfamily.</text>
</comment>
<reference key="1">
    <citation type="journal article" date="2001" name="Lancet">
        <title>Whole genome sequencing of meticillin-resistant Staphylococcus aureus.</title>
        <authorList>
            <person name="Kuroda M."/>
            <person name="Ohta T."/>
            <person name="Uchiyama I."/>
            <person name="Baba T."/>
            <person name="Yuzawa H."/>
            <person name="Kobayashi I."/>
            <person name="Cui L."/>
            <person name="Oguchi A."/>
            <person name="Aoki K."/>
            <person name="Nagai Y."/>
            <person name="Lian J.-Q."/>
            <person name="Ito T."/>
            <person name="Kanamori M."/>
            <person name="Matsumaru H."/>
            <person name="Maruyama A."/>
            <person name="Murakami H."/>
            <person name="Hosoyama A."/>
            <person name="Mizutani-Ui Y."/>
            <person name="Takahashi N.K."/>
            <person name="Sawano T."/>
            <person name="Inoue R."/>
            <person name="Kaito C."/>
            <person name="Sekimizu K."/>
            <person name="Hirakawa H."/>
            <person name="Kuhara S."/>
            <person name="Goto S."/>
            <person name="Yabuzaki J."/>
            <person name="Kanehisa M."/>
            <person name="Yamashita A."/>
            <person name="Oshima K."/>
            <person name="Furuya K."/>
            <person name="Yoshino C."/>
            <person name="Shiba T."/>
            <person name="Hattori M."/>
            <person name="Ogasawara N."/>
            <person name="Hayashi H."/>
            <person name="Hiramatsu K."/>
        </authorList>
    </citation>
    <scope>NUCLEOTIDE SEQUENCE [LARGE SCALE GENOMIC DNA]</scope>
    <source>
        <strain>N315</strain>
    </source>
</reference>
<reference key="2">
    <citation type="journal article" date="2005" name="J. Microbiol. Methods">
        <title>Correlation of proteomic and transcriptomic profiles of Staphylococcus aureus during the post-exponential phase of growth.</title>
        <authorList>
            <person name="Scherl A."/>
            <person name="Francois P."/>
            <person name="Bento M."/>
            <person name="Deshusses J.M."/>
            <person name="Charbonnier Y."/>
            <person name="Converset V."/>
            <person name="Huyghe A."/>
            <person name="Walter N."/>
            <person name="Hoogland C."/>
            <person name="Appel R.D."/>
            <person name="Sanchez J.-C."/>
            <person name="Zimmermann-Ivol C.G."/>
            <person name="Corthals G.L."/>
            <person name="Hochstrasser D.F."/>
            <person name="Schrenzel J."/>
        </authorList>
    </citation>
    <scope>IDENTIFICATION BY MASS SPECTROMETRY</scope>
    <source>
        <strain>N315</strain>
    </source>
</reference>
<reference key="3">
    <citation type="submission" date="2007-10" db="UniProtKB">
        <title>Shotgun proteomic analysis of total and membrane protein extracts of S. aureus strain N315.</title>
        <authorList>
            <person name="Vaezzadeh A.R."/>
            <person name="Deshusses J."/>
            <person name="Lescuyer P."/>
            <person name="Hochstrasser D.F."/>
        </authorList>
    </citation>
    <scope>IDENTIFICATION BY MASS SPECTROMETRY [LARGE SCALE ANALYSIS]</scope>
    <source>
        <strain>N315</strain>
    </source>
</reference>
<accession>P99144</accession>
<accession>Q99UR3</accession>
<evidence type="ECO:0000255" key="1">
    <source>
        <dbReference type="HAMAP-Rule" id="MF_01208"/>
    </source>
</evidence>
<dbReference type="EC" id="2.4.2.10" evidence="1"/>
<dbReference type="EMBL" id="BA000018">
    <property type="protein sequence ID" value="BAB42300.1"/>
    <property type="molecule type" value="Genomic_DNA"/>
</dbReference>
<dbReference type="PIR" id="H89892">
    <property type="entry name" value="H89892"/>
</dbReference>
<dbReference type="RefSeq" id="WP_001040248.1">
    <property type="nucleotide sequence ID" value="NC_002745.2"/>
</dbReference>
<dbReference type="SMR" id="P99144"/>
<dbReference type="EnsemblBacteria" id="BAB42300">
    <property type="protein sequence ID" value="BAB42300"/>
    <property type="gene ID" value="BAB42300"/>
</dbReference>
<dbReference type="KEGG" id="sau:SA1048"/>
<dbReference type="HOGENOM" id="CLU_074878_1_1_9"/>
<dbReference type="UniPathway" id="UPA00070">
    <property type="reaction ID" value="UER00119"/>
</dbReference>
<dbReference type="GO" id="GO:0000287">
    <property type="term" value="F:magnesium ion binding"/>
    <property type="evidence" value="ECO:0007669"/>
    <property type="project" value="UniProtKB-UniRule"/>
</dbReference>
<dbReference type="GO" id="GO:0004588">
    <property type="term" value="F:orotate phosphoribosyltransferase activity"/>
    <property type="evidence" value="ECO:0007669"/>
    <property type="project" value="UniProtKB-UniRule"/>
</dbReference>
<dbReference type="GO" id="GO:0044205">
    <property type="term" value="P:'de novo' UMP biosynthetic process"/>
    <property type="evidence" value="ECO:0007669"/>
    <property type="project" value="UniProtKB-UniRule"/>
</dbReference>
<dbReference type="GO" id="GO:0019856">
    <property type="term" value="P:pyrimidine nucleobase biosynthetic process"/>
    <property type="evidence" value="ECO:0007669"/>
    <property type="project" value="TreeGrafter"/>
</dbReference>
<dbReference type="CDD" id="cd06223">
    <property type="entry name" value="PRTases_typeI"/>
    <property type="match status" value="1"/>
</dbReference>
<dbReference type="Gene3D" id="3.40.50.2020">
    <property type="match status" value="1"/>
</dbReference>
<dbReference type="HAMAP" id="MF_01208">
    <property type="entry name" value="PyrE"/>
    <property type="match status" value="1"/>
</dbReference>
<dbReference type="InterPro" id="IPR023031">
    <property type="entry name" value="OPRT"/>
</dbReference>
<dbReference type="InterPro" id="IPR004467">
    <property type="entry name" value="Or_phspho_trans_dom"/>
</dbReference>
<dbReference type="InterPro" id="IPR000836">
    <property type="entry name" value="PRibTrfase_dom"/>
</dbReference>
<dbReference type="InterPro" id="IPR029057">
    <property type="entry name" value="PRTase-like"/>
</dbReference>
<dbReference type="NCBIfam" id="TIGR00336">
    <property type="entry name" value="pyrE"/>
    <property type="match status" value="1"/>
</dbReference>
<dbReference type="PANTHER" id="PTHR19278">
    <property type="entry name" value="OROTATE PHOSPHORIBOSYLTRANSFERASE"/>
    <property type="match status" value="1"/>
</dbReference>
<dbReference type="PANTHER" id="PTHR19278:SF9">
    <property type="entry name" value="URIDINE 5'-MONOPHOSPHATE SYNTHASE"/>
    <property type="match status" value="1"/>
</dbReference>
<dbReference type="Pfam" id="PF00156">
    <property type="entry name" value="Pribosyltran"/>
    <property type="match status" value="1"/>
</dbReference>
<dbReference type="SUPFAM" id="SSF53271">
    <property type="entry name" value="PRTase-like"/>
    <property type="match status" value="1"/>
</dbReference>
<dbReference type="PROSITE" id="PS00103">
    <property type="entry name" value="PUR_PYR_PR_TRANSFER"/>
    <property type="match status" value="1"/>
</dbReference>
<proteinExistence type="evidence at protein level"/>
<keyword id="KW-0328">Glycosyltransferase</keyword>
<keyword id="KW-0460">Magnesium</keyword>
<keyword id="KW-0665">Pyrimidine biosynthesis</keyword>
<keyword id="KW-0808">Transferase</keyword>